<sequence length="232" mass="25693">MPKRTTHTYSSEDAAPDGPDSDLFVYYCKHCGSHVLITDTQLQKMPKRKTDRSNVLDKKTHLARLNVSEGGKVLLKRGEGKMERQFRMNCIGCELFVCYRAEENLETASFIYIVDGALSAVAAETNPQDAPVPPCISQLDGGLVQVAIEVEDRAQRSAITRVNADDVRVTVAAPAARGEANNELLEFMGRVLGLRLSQMTLQRGWNSKSKLLVVEDLSARQVYEKLLEAVVP</sequence>
<evidence type="ECO:0000250" key="1"/>
<evidence type="ECO:0000269" key="2">
    <source>
    </source>
</evidence>
<evidence type="ECO:0000303" key="3">
    <source>
    </source>
</evidence>
<evidence type="ECO:0000305" key="4"/>
<feature type="chain" id="PRO_0000429605" description="UPF0235 protein At5g63440">
    <location>
        <begin position="1"/>
        <end position="232"/>
    </location>
</feature>
<feature type="splice variant" id="VSP_054998" description="In isoform 3." evidence="4">
    <original>MPKRTTHTYSSEDAAPDGPDSDLFVYYCKHCGSHVLITDTQ</original>
    <variation>MDPTLISSYTTANTVVLMSLSL</variation>
    <location>
        <begin position="1"/>
        <end position="41"/>
    </location>
</feature>
<feature type="splice variant" id="VSP_054999" description="In isoform 2." evidence="3">
    <original>LGLRLSQMTLQRGW</original>
    <variation>PNQSVINHFLRFIL</variation>
    <location>
        <begin position="192"/>
        <end position="205"/>
    </location>
</feature>
<feature type="splice variant" id="VSP_055000" description="In isoform 2." evidence="3">
    <location>
        <begin position="206"/>
        <end position="232"/>
    </location>
</feature>
<dbReference type="EMBL" id="AB007649">
    <property type="protein sequence ID" value="BAB08809.1"/>
    <property type="status" value="ALT_SEQ"/>
    <property type="molecule type" value="Genomic_DNA"/>
</dbReference>
<dbReference type="EMBL" id="CP002688">
    <property type="protein sequence ID" value="AED97747.1"/>
    <property type="molecule type" value="Genomic_DNA"/>
</dbReference>
<dbReference type="EMBL" id="CP002688">
    <property type="protein sequence ID" value="AED97748.1"/>
    <property type="molecule type" value="Genomic_DNA"/>
</dbReference>
<dbReference type="EMBL" id="CP002688">
    <property type="protein sequence ID" value="AED97749.1"/>
    <property type="molecule type" value="Genomic_DNA"/>
</dbReference>
<dbReference type="EMBL" id="AK118693">
    <property type="protein sequence ID" value="BAC43287.1"/>
    <property type="molecule type" value="mRNA"/>
</dbReference>
<dbReference type="EMBL" id="AF428410">
    <property type="protein sequence ID" value="AAL16178.1"/>
    <property type="molecule type" value="mRNA"/>
</dbReference>
<dbReference type="EMBL" id="AY133627">
    <property type="protein sequence ID" value="AAM91457.1"/>
    <property type="molecule type" value="mRNA"/>
</dbReference>
<dbReference type="RefSeq" id="NP_001078789.1">
    <molecule id="Q8GWQ6-3"/>
    <property type="nucleotide sequence ID" value="NM_001085320.1"/>
</dbReference>
<dbReference type="RefSeq" id="NP_568972.2">
    <molecule id="Q8GWQ6-1"/>
    <property type="nucleotide sequence ID" value="NM_125739.4"/>
</dbReference>
<dbReference type="RefSeq" id="NP_851256.1">
    <molecule id="Q8GWQ6-2"/>
    <property type="nucleotide sequence ID" value="NM_180925.2"/>
</dbReference>
<dbReference type="SMR" id="Q8GWQ6"/>
<dbReference type="BioGRID" id="21705">
    <property type="interactions" value="1"/>
</dbReference>
<dbReference type="FunCoup" id="Q8GWQ6">
    <property type="interactions" value="3821"/>
</dbReference>
<dbReference type="IntAct" id="Q8GWQ6">
    <property type="interactions" value="1"/>
</dbReference>
<dbReference type="MINT" id="Q8GWQ6"/>
<dbReference type="STRING" id="3702.Q8GWQ6"/>
<dbReference type="PaxDb" id="3702-AT5G63440.2"/>
<dbReference type="ProteomicsDB" id="243172">
    <molecule id="Q8GWQ6-1"/>
</dbReference>
<dbReference type="EnsemblPlants" id="AT5G63440.1">
    <molecule id="Q8GWQ6-2"/>
    <property type="protein sequence ID" value="AT5G63440.1"/>
    <property type="gene ID" value="AT5G63440"/>
</dbReference>
<dbReference type="EnsemblPlants" id="AT5G63440.2">
    <molecule id="Q8GWQ6-1"/>
    <property type="protein sequence ID" value="AT5G63440.2"/>
    <property type="gene ID" value="AT5G63440"/>
</dbReference>
<dbReference type="EnsemblPlants" id="AT5G63440.3">
    <molecule id="Q8GWQ6-3"/>
    <property type="protein sequence ID" value="AT5G63440.3"/>
    <property type="gene ID" value="AT5G63440"/>
</dbReference>
<dbReference type="GeneID" id="836463"/>
<dbReference type="Gramene" id="AT5G63440.1">
    <molecule id="Q8GWQ6-2"/>
    <property type="protein sequence ID" value="AT5G63440.1"/>
    <property type="gene ID" value="AT5G63440"/>
</dbReference>
<dbReference type="Gramene" id="AT5G63440.2">
    <molecule id="Q8GWQ6-1"/>
    <property type="protein sequence ID" value="AT5G63440.2"/>
    <property type="gene ID" value="AT5G63440"/>
</dbReference>
<dbReference type="Gramene" id="AT5G63440.3">
    <molecule id="Q8GWQ6-3"/>
    <property type="protein sequence ID" value="AT5G63440.3"/>
    <property type="gene ID" value="AT5G63440"/>
</dbReference>
<dbReference type="KEGG" id="ath:AT5G63440"/>
<dbReference type="Araport" id="AT5G63440"/>
<dbReference type="TAIR" id="AT5G63440">
    <property type="gene designation" value="CSU4"/>
</dbReference>
<dbReference type="eggNOG" id="KOG3276">
    <property type="taxonomic scope" value="Eukaryota"/>
</dbReference>
<dbReference type="eggNOG" id="KOG4397">
    <property type="taxonomic scope" value="Eukaryota"/>
</dbReference>
<dbReference type="HOGENOM" id="CLU_075663_0_0_1"/>
<dbReference type="InParanoid" id="Q8GWQ6"/>
<dbReference type="OMA" id="CSGCELF"/>
<dbReference type="OrthoDB" id="418131at2759"/>
<dbReference type="PhylomeDB" id="Q8GWQ6"/>
<dbReference type="CD-CODE" id="4299E36E">
    <property type="entry name" value="Nucleolus"/>
</dbReference>
<dbReference type="PRO" id="PR:Q8GWQ6"/>
<dbReference type="Proteomes" id="UP000006548">
    <property type="component" value="Chromosome 5"/>
</dbReference>
<dbReference type="ExpressionAtlas" id="Q8GWQ6">
    <property type="expression patterns" value="baseline and differential"/>
</dbReference>
<dbReference type="GO" id="GO:0016607">
    <property type="term" value="C:nuclear speck"/>
    <property type="evidence" value="ECO:0007669"/>
    <property type="project" value="UniProtKB-SubCell"/>
</dbReference>
<dbReference type="GO" id="GO:0005634">
    <property type="term" value="C:nucleus"/>
    <property type="evidence" value="ECO:0000314"/>
    <property type="project" value="TAIR"/>
</dbReference>
<dbReference type="GO" id="GO:0005681">
    <property type="term" value="C:spliceosomal complex"/>
    <property type="evidence" value="ECO:0007669"/>
    <property type="project" value="UniProtKB-KW"/>
</dbReference>
<dbReference type="GO" id="GO:0097167">
    <property type="term" value="P:circadian regulation of translation"/>
    <property type="evidence" value="ECO:0000315"/>
    <property type="project" value="TAIR"/>
</dbReference>
<dbReference type="GO" id="GO:0006397">
    <property type="term" value="P:mRNA processing"/>
    <property type="evidence" value="ECO:0007669"/>
    <property type="project" value="UniProtKB-KW"/>
</dbReference>
<dbReference type="GO" id="GO:0009640">
    <property type="term" value="P:photomorphogenesis"/>
    <property type="evidence" value="ECO:0000315"/>
    <property type="project" value="TAIR"/>
</dbReference>
<dbReference type="GO" id="GO:2000306">
    <property type="term" value="P:positive regulation of photomorphogenesis"/>
    <property type="evidence" value="ECO:0000315"/>
    <property type="project" value="TAIR"/>
</dbReference>
<dbReference type="GO" id="GO:0008380">
    <property type="term" value="P:RNA splicing"/>
    <property type="evidence" value="ECO:0007669"/>
    <property type="project" value="UniProtKB-KW"/>
</dbReference>
<dbReference type="FunFam" id="3.30.1200.10:FF:000001">
    <property type="entry name" value="UPF0235 protein isoform X1"/>
    <property type="match status" value="1"/>
</dbReference>
<dbReference type="Gene3D" id="3.30.1200.10">
    <property type="entry name" value="YggU-like"/>
    <property type="match status" value="1"/>
</dbReference>
<dbReference type="HAMAP" id="MF_00634">
    <property type="entry name" value="UPF0235"/>
    <property type="match status" value="1"/>
</dbReference>
<dbReference type="InterPro" id="IPR003746">
    <property type="entry name" value="DUF167"/>
</dbReference>
<dbReference type="InterPro" id="IPR053323">
    <property type="entry name" value="UPF0235"/>
</dbReference>
<dbReference type="InterPro" id="IPR036591">
    <property type="entry name" value="YggU-like_sf"/>
</dbReference>
<dbReference type="NCBIfam" id="TIGR00251">
    <property type="entry name" value="DUF167 family protein"/>
    <property type="match status" value="1"/>
</dbReference>
<dbReference type="PANTHER" id="PTHR47525">
    <property type="entry name" value="OS07G0295200 PROTEIN"/>
    <property type="match status" value="1"/>
</dbReference>
<dbReference type="PANTHER" id="PTHR47525:SF1">
    <property type="entry name" value="OS07G0295200 PROTEIN"/>
    <property type="match status" value="1"/>
</dbReference>
<dbReference type="Pfam" id="PF02594">
    <property type="entry name" value="DUF167"/>
    <property type="match status" value="1"/>
</dbReference>
<dbReference type="SMART" id="SM01152">
    <property type="entry name" value="DUF167"/>
    <property type="match status" value="1"/>
</dbReference>
<dbReference type="SUPFAM" id="SSF69786">
    <property type="entry name" value="YggU-like"/>
    <property type="match status" value="1"/>
</dbReference>
<reference key="1">
    <citation type="journal article" date="1997" name="DNA Res.">
        <title>Structural analysis of Arabidopsis thaliana chromosome 5. III. Sequence features of the regions of 1,191,918 bp covered by seventeen physically assigned P1 clones.</title>
        <authorList>
            <person name="Nakamura Y."/>
            <person name="Sato S."/>
            <person name="Kaneko T."/>
            <person name="Kotani H."/>
            <person name="Asamizu E."/>
            <person name="Miyajima N."/>
            <person name="Tabata S."/>
        </authorList>
    </citation>
    <scope>NUCLEOTIDE SEQUENCE [LARGE SCALE GENOMIC DNA]</scope>
    <source>
        <strain>cv. Columbia</strain>
    </source>
</reference>
<reference key="2">
    <citation type="journal article" date="2017" name="Plant J.">
        <title>Araport11: a complete reannotation of the Arabidopsis thaliana reference genome.</title>
        <authorList>
            <person name="Cheng C.Y."/>
            <person name="Krishnakumar V."/>
            <person name="Chan A.P."/>
            <person name="Thibaud-Nissen F."/>
            <person name="Schobel S."/>
            <person name="Town C.D."/>
        </authorList>
    </citation>
    <scope>GENOME REANNOTATION</scope>
    <source>
        <strain>cv. Columbia</strain>
    </source>
</reference>
<reference key="3">
    <citation type="journal article" date="2002" name="Science">
        <title>Functional annotation of a full-length Arabidopsis cDNA collection.</title>
        <authorList>
            <person name="Seki M."/>
            <person name="Narusaka M."/>
            <person name="Kamiya A."/>
            <person name="Ishida J."/>
            <person name="Satou M."/>
            <person name="Sakurai T."/>
            <person name="Nakajima M."/>
            <person name="Enju A."/>
            <person name="Akiyama K."/>
            <person name="Oono Y."/>
            <person name="Muramatsu M."/>
            <person name="Hayashizaki Y."/>
            <person name="Kawai J."/>
            <person name="Carninci P."/>
            <person name="Itoh M."/>
            <person name="Ishii Y."/>
            <person name="Arakawa T."/>
            <person name="Shibata K."/>
            <person name="Shinagawa A."/>
            <person name="Shinozaki K."/>
        </authorList>
    </citation>
    <scope>NUCLEOTIDE SEQUENCE [LARGE SCALE MRNA] (ISOFORM 1)</scope>
    <source>
        <strain>cv. Columbia</strain>
    </source>
</reference>
<reference key="4">
    <citation type="journal article" date="2003" name="Science">
        <title>Empirical analysis of transcriptional activity in the Arabidopsis genome.</title>
        <authorList>
            <person name="Yamada K."/>
            <person name="Lim J."/>
            <person name="Dale J.M."/>
            <person name="Chen H."/>
            <person name="Shinn P."/>
            <person name="Palm C.J."/>
            <person name="Southwick A.M."/>
            <person name="Wu H.C."/>
            <person name="Kim C.J."/>
            <person name="Nguyen M."/>
            <person name="Pham P.K."/>
            <person name="Cheuk R.F."/>
            <person name="Karlin-Newmann G."/>
            <person name="Liu S.X."/>
            <person name="Lam B."/>
            <person name="Sakano H."/>
            <person name="Wu T."/>
            <person name="Yu G."/>
            <person name="Miranda M."/>
            <person name="Quach H.L."/>
            <person name="Tripp M."/>
            <person name="Chang C.H."/>
            <person name="Lee J.M."/>
            <person name="Toriumi M.J."/>
            <person name="Chan M.M."/>
            <person name="Tang C.C."/>
            <person name="Onodera C.S."/>
            <person name="Deng J.M."/>
            <person name="Akiyama K."/>
            <person name="Ansari Y."/>
            <person name="Arakawa T."/>
            <person name="Banh J."/>
            <person name="Banno F."/>
            <person name="Bowser L."/>
            <person name="Brooks S.Y."/>
            <person name="Carninci P."/>
            <person name="Chao Q."/>
            <person name="Choy N."/>
            <person name="Enju A."/>
            <person name="Goldsmith A.D."/>
            <person name="Gurjal M."/>
            <person name="Hansen N.F."/>
            <person name="Hayashizaki Y."/>
            <person name="Johnson-Hopson C."/>
            <person name="Hsuan V.W."/>
            <person name="Iida K."/>
            <person name="Karnes M."/>
            <person name="Khan S."/>
            <person name="Koesema E."/>
            <person name="Ishida J."/>
            <person name="Jiang P.X."/>
            <person name="Jones T."/>
            <person name="Kawai J."/>
            <person name="Kamiya A."/>
            <person name="Meyers C."/>
            <person name="Nakajima M."/>
            <person name="Narusaka M."/>
            <person name="Seki M."/>
            <person name="Sakurai T."/>
            <person name="Satou M."/>
            <person name="Tamse R."/>
            <person name="Vaysberg M."/>
            <person name="Wallender E.K."/>
            <person name="Wong C."/>
            <person name="Yamamura Y."/>
            <person name="Yuan S."/>
            <person name="Shinozaki K."/>
            <person name="Davis R.W."/>
            <person name="Theologis A."/>
            <person name="Ecker J.R."/>
        </authorList>
    </citation>
    <scope>NUCLEOTIDE SEQUENCE [LARGE SCALE MRNA] (ISOFORM 2)</scope>
    <source>
        <strain>cv. Columbia</strain>
    </source>
</reference>
<reference key="5">
    <citation type="journal article" date="2013" name="FEBS Lett.">
        <title>CACTIN is an essential nuclear protein in Arabidopsis and may be associated with the eukaryotic spliceosome.</title>
        <authorList>
            <person name="Baldwin K.L."/>
            <person name="Dinh E.M."/>
            <person name="Hart B.M."/>
            <person name="Masson P.H."/>
        </authorList>
    </citation>
    <scope>SUBCELLULAR LOCATION</scope>
    <scope>INTERACTION WITH CTN</scope>
    <scope>DISRUPTION PHENOTYPE</scope>
</reference>
<organism>
    <name type="scientific">Arabidopsis thaliana</name>
    <name type="common">Mouse-ear cress</name>
    <dbReference type="NCBI Taxonomy" id="3702"/>
    <lineage>
        <taxon>Eukaryota</taxon>
        <taxon>Viridiplantae</taxon>
        <taxon>Streptophyta</taxon>
        <taxon>Embryophyta</taxon>
        <taxon>Tracheophyta</taxon>
        <taxon>Spermatophyta</taxon>
        <taxon>Magnoliopsida</taxon>
        <taxon>eudicotyledons</taxon>
        <taxon>Gunneridae</taxon>
        <taxon>Pentapetalae</taxon>
        <taxon>rosids</taxon>
        <taxon>malvids</taxon>
        <taxon>Brassicales</taxon>
        <taxon>Brassicaceae</taxon>
        <taxon>Camelineae</taxon>
        <taxon>Arabidopsis</taxon>
    </lineage>
</organism>
<name>Y6344_ARATH</name>
<keyword id="KW-0025">Alternative splicing</keyword>
<keyword id="KW-0507">mRNA processing</keyword>
<keyword id="KW-0508">mRNA splicing</keyword>
<keyword id="KW-0539">Nucleus</keyword>
<keyword id="KW-1185">Reference proteome</keyword>
<keyword id="KW-0747">Spliceosome</keyword>
<comment type="function">
    <text evidence="1">May play a role during early embryonic development. Probably involved in pre-mRNA splicing (By similarity).</text>
</comment>
<comment type="subunit">
    <text evidence="2">Interacts with CTN.</text>
</comment>
<comment type="interaction">
    <interactant intactId="EBI-8454619">
        <id>Q8GWQ6</id>
    </interactant>
    <interactant intactId="EBI-8454629">
        <id>F4I2J8</id>
        <label>CTN</label>
    </interactant>
    <organismsDiffer>false</organismsDiffer>
    <experiments>4</experiments>
</comment>
<comment type="subcellular location">
    <subcellularLocation>
        <location evidence="2">Nucleus speckle</location>
    </subcellularLocation>
</comment>
<comment type="alternative products">
    <event type="alternative splicing"/>
    <isoform>
        <id>Q8GWQ6-1</id>
        <name>1</name>
        <sequence type="displayed"/>
    </isoform>
    <isoform>
        <id>Q8GWQ6-2</id>
        <name>2</name>
        <sequence type="described" ref="VSP_054999 VSP_055000"/>
    </isoform>
    <isoform>
        <id>Q8GWQ6-3</id>
        <name>3</name>
        <sequence type="described" ref="VSP_054998"/>
    </isoform>
</comment>
<comment type="disruption phenotype">
    <text evidence="2">No visible phenotype.</text>
</comment>
<comment type="similarity">
    <text evidence="4">Belongs to the UPF0235 family.</text>
</comment>
<comment type="sequence caution" evidence="4">
    <conflict type="erroneous gene model prediction">
        <sequence resource="EMBL-CDS" id="BAB08809"/>
    </conflict>
</comment>
<protein>
    <recommendedName>
        <fullName>UPF0235 protein At5g63440</fullName>
    </recommendedName>
</protein>
<gene>
    <name type="ordered locus">At5g63440</name>
    <name type="ORF">MLE2.7</name>
</gene>
<proteinExistence type="evidence at protein level"/>
<accession>Q8GWQ6</accession>
<accession>A8MRN7</accession>
<accession>Q944I0</accession>
<accession>Q9FMV8</accession>